<sequence>MSEHKKSSKIIGIDLGTTNSCVSVMEGGQAKVITSSEGTRTTPSIVAFKGSETLVGIPAKRQAVTNPEKTLASTKRFIGRKYSEVESEIKTVPYKVTSGSNGDAVFQVEGKQYTPEEIGAHILMKMKETAEAYLGETITEAVITVPAYFNDSQRASTKDAGRIAGLDVKRIIPEPTAAALAYGIDKAGDKKIAVFDLGGGTFDISILEIGDGVFEVLSTNGDTHLGGDDFDEVIIKWMIEEFQKQEGIDLGKDNMALQRLKDAAEKAKIELSGMSSTEINQPFITMDANGPKHLTLTLTRAHFEKLASNLIERTKAPCIKALADAKLSASDIDDVLLVGGMSRMPAVQEIVKDIFGKEPNKGVNPDEVVAIGAAIQGGVLGGEVKDVLLLDVIPLSLGIETLGGVMTPLVERNTTIPTQKKQIFSTAADNQPAVTIVVLQGERPMAKDNKEIGRFDLTDIPPAPRGHPQIEVTFDIDANGILHVSAKDAASGREQKIRIEASSGLKEDEIQRMIRDAEQNKEEDKKRREASDVRNEADSMIFRAEKAINDYKANIPESLVKEIEERVEKVRSALKEDASTEKIKEASEELSRHMQKIGEAMQSQSASAAPSSAANAQGGPNINTEDLKKHSFSTKPPAGNSTSASSNNENIEEADVEIVDKPND</sequence>
<gene>
    <name evidence="1" type="primary">dnaK</name>
    <name type="ordered locus">CF0765</name>
</gene>
<keyword id="KW-0067">ATP-binding</keyword>
<keyword id="KW-0143">Chaperone</keyword>
<keyword id="KW-0547">Nucleotide-binding</keyword>
<keyword id="KW-0597">Phosphoprotein</keyword>
<keyword id="KW-0346">Stress response</keyword>
<name>DNAK_CHLFF</name>
<proteinExistence type="inferred from homology"/>
<comment type="function">
    <text evidence="1">Acts as a chaperone.</text>
</comment>
<comment type="induction">
    <text evidence="1">By stress conditions e.g. heat shock.</text>
</comment>
<comment type="similarity">
    <text evidence="1">Belongs to the heat shock protein 70 family.</text>
</comment>
<accession>Q253K1</accession>
<reference key="1">
    <citation type="journal article" date="2006" name="DNA Res.">
        <title>Genome sequence of the cat pathogen, Chlamydophila felis.</title>
        <authorList>
            <person name="Azuma Y."/>
            <person name="Hirakawa H."/>
            <person name="Yamashita A."/>
            <person name="Cai Y."/>
            <person name="Rahman M.A."/>
            <person name="Suzuki H."/>
            <person name="Mitaku S."/>
            <person name="Toh H."/>
            <person name="Goto S."/>
            <person name="Murakami T."/>
            <person name="Sugi K."/>
            <person name="Hayashi H."/>
            <person name="Fukushi H."/>
            <person name="Hattori M."/>
            <person name="Kuhara S."/>
            <person name="Shirai M."/>
        </authorList>
    </citation>
    <scope>NUCLEOTIDE SEQUENCE [LARGE SCALE GENOMIC DNA]</scope>
    <source>
        <strain>Fe/C-56</strain>
    </source>
</reference>
<organism>
    <name type="scientific">Chlamydia felis (strain Fe/C-56)</name>
    <name type="common">Chlamydophila felis</name>
    <dbReference type="NCBI Taxonomy" id="264202"/>
    <lineage>
        <taxon>Bacteria</taxon>
        <taxon>Pseudomonadati</taxon>
        <taxon>Chlamydiota</taxon>
        <taxon>Chlamydiia</taxon>
        <taxon>Chlamydiales</taxon>
        <taxon>Chlamydiaceae</taxon>
        <taxon>Chlamydia/Chlamydophila group</taxon>
        <taxon>Chlamydia</taxon>
    </lineage>
</organism>
<dbReference type="EMBL" id="AP006861">
    <property type="protein sequence ID" value="BAE81537.1"/>
    <property type="molecule type" value="Genomic_DNA"/>
</dbReference>
<dbReference type="RefSeq" id="WP_011458315.1">
    <property type="nucleotide sequence ID" value="NC_007899.1"/>
</dbReference>
<dbReference type="SMR" id="Q253K1"/>
<dbReference type="STRING" id="264202.CF0765"/>
<dbReference type="KEGG" id="cfe:CF0765"/>
<dbReference type="eggNOG" id="COG0443">
    <property type="taxonomic scope" value="Bacteria"/>
</dbReference>
<dbReference type="HOGENOM" id="CLU_005965_2_1_0"/>
<dbReference type="OrthoDB" id="9766019at2"/>
<dbReference type="Proteomes" id="UP000001260">
    <property type="component" value="Chromosome"/>
</dbReference>
<dbReference type="GO" id="GO:0005524">
    <property type="term" value="F:ATP binding"/>
    <property type="evidence" value="ECO:0007669"/>
    <property type="project" value="UniProtKB-UniRule"/>
</dbReference>
<dbReference type="GO" id="GO:0140662">
    <property type="term" value="F:ATP-dependent protein folding chaperone"/>
    <property type="evidence" value="ECO:0007669"/>
    <property type="project" value="InterPro"/>
</dbReference>
<dbReference type="GO" id="GO:0051082">
    <property type="term" value="F:unfolded protein binding"/>
    <property type="evidence" value="ECO:0007669"/>
    <property type="project" value="InterPro"/>
</dbReference>
<dbReference type="CDD" id="cd10234">
    <property type="entry name" value="ASKHA_NBD_HSP70_DnaK-like"/>
    <property type="match status" value="1"/>
</dbReference>
<dbReference type="FunFam" id="2.60.34.10:FF:000014">
    <property type="entry name" value="Chaperone protein DnaK HSP70"/>
    <property type="match status" value="1"/>
</dbReference>
<dbReference type="FunFam" id="3.30.420.40:FF:000020">
    <property type="entry name" value="Chaperone protein HscA homolog"/>
    <property type="match status" value="1"/>
</dbReference>
<dbReference type="FunFam" id="1.20.1270.10:FF:000001">
    <property type="entry name" value="Molecular chaperone DnaK"/>
    <property type="match status" value="1"/>
</dbReference>
<dbReference type="FunFam" id="3.30.420.40:FF:000004">
    <property type="entry name" value="Molecular chaperone DnaK"/>
    <property type="match status" value="1"/>
</dbReference>
<dbReference type="FunFam" id="3.90.640.10:FF:000003">
    <property type="entry name" value="Molecular chaperone DnaK"/>
    <property type="match status" value="1"/>
</dbReference>
<dbReference type="Gene3D" id="1.20.1270.10">
    <property type="match status" value="1"/>
</dbReference>
<dbReference type="Gene3D" id="3.30.420.40">
    <property type="match status" value="2"/>
</dbReference>
<dbReference type="Gene3D" id="3.90.640.10">
    <property type="entry name" value="Actin, Chain A, domain 4"/>
    <property type="match status" value="1"/>
</dbReference>
<dbReference type="Gene3D" id="2.60.34.10">
    <property type="entry name" value="Substrate Binding Domain Of DNAk, Chain A, domain 1"/>
    <property type="match status" value="1"/>
</dbReference>
<dbReference type="HAMAP" id="MF_00332">
    <property type="entry name" value="DnaK"/>
    <property type="match status" value="1"/>
</dbReference>
<dbReference type="InterPro" id="IPR043129">
    <property type="entry name" value="ATPase_NBD"/>
</dbReference>
<dbReference type="InterPro" id="IPR012725">
    <property type="entry name" value="Chaperone_DnaK"/>
</dbReference>
<dbReference type="InterPro" id="IPR018181">
    <property type="entry name" value="Heat_shock_70_CS"/>
</dbReference>
<dbReference type="InterPro" id="IPR029048">
    <property type="entry name" value="HSP70_C_sf"/>
</dbReference>
<dbReference type="InterPro" id="IPR029047">
    <property type="entry name" value="HSP70_peptide-bd_sf"/>
</dbReference>
<dbReference type="InterPro" id="IPR013126">
    <property type="entry name" value="Hsp_70_fam"/>
</dbReference>
<dbReference type="NCBIfam" id="NF001413">
    <property type="entry name" value="PRK00290.1"/>
    <property type="match status" value="1"/>
</dbReference>
<dbReference type="NCBIfam" id="TIGR02350">
    <property type="entry name" value="prok_dnaK"/>
    <property type="match status" value="1"/>
</dbReference>
<dbReference type="PANTHER" id="PTHR19375">
    <property type="entry name" value="HEAT SHOCK PROTEIN 70KDA"/>
    <property type="match status" value="1"/>
</dbReference>
<dbReference type="Pfam" id="PF00012">
    <property type="entry name" value="HSP70"/>
    <property type="match status" value="1"/>
</dbReference>
<dbReference type="PRINTS" id="PR00301">
    <property type="entry name" value="HEATSHOCK70"/>
</dbReference>
<dbReference type="SUPFAM" id="SSF53067">
    <property type="entry name" value="Actin-like ATPase domain"/>
    <property type="match status" value="2"/>
</dbReference>
<dbReference type="SUPFAM" id="SSF100934">
    <property type="entry name" value="Heat shock protein 70kD (HSP70), C-terminal subdomain"/>
    <property type="match status" value="1"/>
</dbReference>
<dbReference type="SUPFAM" id="SSF100920">
    <property type="entry name" value="Heat shock protein 70kD (HSP70), peptide-binding domain"/>
    <property type="match status" value="1"/>
</dbReference>
<dbReference type="PROSITE" id="PS00297">
    <property type="entry name" value="HSP70_1"/>
    <property type="match status" value="1"/>
</dbReference>
<dbReference type="PROSITE" id="PS00329">
    <property type="entry name" value="HSP70_2"/>
    <property type="match status" value="1"/>
</dbReference>
<dbReference type="PROSITE" id="PS01036">
    <property type="entry name" value="HSP70_3"/>
    <property type="match status" value="1"/>
</dbReference>
<evidence type="ECO:0000255" key="1">
    <source>
        <dbReference type="HAMAP-Rule" id="MF_00332"/>
    </source>
</evidence>
<evidence type="ECO:0000256" key="2">
    <source>
        <dbReference type="SAM" id="MobiDB-lite"/>
    </source>
</evidence>
<protein>
    <recommendedName>
        <fullName evidence="1">Chaperone protein DnaK</fullName>
    </recommendedName>
    <alternativeName>
        <fullName evidence="1">HSP70</fullName>
    </alternativeName>
    <alternativeName>
        <fullName evidence="1">Heat shock 70 kDa protein</fullName>
    </alternativeName>
    <alternativeName>
        <fullName evidence="1">Heat shock protein 70</fullName>
    </alternativeName>
</protein>
<feature type="chain" id="PRO_1000205177" description="Chaperone protein DnaK">
    <location>
        <begin position="1"/>
        <end position="664"/>
    </location>
</feature>
<feature type="region of interest" description="Disordered" evidence="2">
    <location>
        <begin position="574"/>
        <end position="664"/>
    </location>
</feature>
<feature type="compositionally biased region" description="Basic and acidic residues" evidence="2">
    <location>
        <begin position="574"/>
        <end position="592"/>
    </location>
</feature>
<feature type="compositionally biased region" description="Low complexity" evidence="2">
    <location>
        <begin position="600"/>
        <end position="617"/>
    </location>
</feature>
<feature type="compositionally biased region" description="Polar residues" evidence="2">
    <location>
        <begin position="639"/>
        <end position="649"/>
    </location>
</feature>
<feature type="modified residue" description="Phosphothreonine; by autocatalysis" evidence="1">
    <location>
        <position position="201"/>
    </location>
</feature>